<name>Y3721_ARATH</name>
<sequence>MGSSSSSSLNNSPIRADSMVTPESQMTVNDNKNDNVSILSPSVKKSFESPRKSTSIPANNNLTPVKSRWSFSSSKKSFGSKDETFFDSQPWLQSDSDDDFHSVNGDFTPSLGNTPKSSFSDRPPRFHNLIFHEKKPSRGSSSPAPLPRRKKLGELFRDSIREEREESGSSSAISTPYLSGANSREFNDTAIEKEEKKKSNWHHHRCLPGFSSCGGSFMERRKKMSSETPVVAVK</sequence>
<comment type="subunit">
    <text evidence="2">Interacts with RLK902.</text>
</comment>
<comment type="tissue specificity">
    <text evidence="2">Expressed in stems, rosette leaves and roots and weakly in inflorescences.</text>
</comment>
<comment type="induction">
    <text evidence="2">Rapid but transient induction by wounding, salicylic acid treatment or pathogen infection.</text>
</comment>
<reference key="1">
    <citation type="journal article" date="2000" name="DNA Res.">
        <title>Structural analysis of Arabidopsis thaliana chromosome 3. II. Sequence features of the 4,251,695 bp regions covered by 90 P1, TAC and BAC clones.</title>
        <authorList>
            <person name="Kaneko T."/>
            <person name="Katoh T."/>
            <person name="Sato S."/>
            <person name="Nakamura Y."/>
            <person name="Asamizu E."/>
            <person name="Tabata S."/>
        </authorList>
    </citation>
    <scope>NUCLEOTIDE SEQUENCE [LARGE SCALE GENOMIC DNA]</scope>
    <source>
        <strain>cv. Columbia</strain>
    </source>
</reference>
<reference key="2">
    <citation type="journal article" date="2017" name="Plant J.">
        <title>Araport11: a complete reannotation of the Arabidopsis thaliana reference genome.</title>
        <authorList>
            <person name="Cheng C.Y."/>
            <person name="Krishnakumar V."/>
            <person name="Chan A.P."/>
            <person name="Thibaud-Nissen F."/>
            <person name="Schobel S."/>
            <person name="Town C.D."/>
        </authorList>
    </citation>
    <scope>GENOME REANNOTATION</scope>
    <source>
        <strain>cv. Columbia</strain>
    </source>
</reference>
<reference key="3">
    <citation type="journal article" date="2003" name="Science">
        <title>Empirical analysis of transcriptional activity in the Arabidopsis genome.</title>
        <authorList>
            <person name="Yamada K."/>
            <person name="Lim J."/>
            <person name="Dale J.M."/>
            <person name="Chen H."/>
            <person name="Shinn P."/>
            <person name="Palm C.J."/>
            <person name="Southwick A.M."/>
            <person name="Wu H.C."/>
            <person name="Kim C.J."/>
            <person name="Nguyen M."/>
            <person name="Pham P.K."/>
            <person name="Cheuk R.F."/>
            <person name="Karlin-Newmann G."/>
            <person name="Liu S.X."/>
            <person name="Lam B."/>
            <person name="Sakano H."/>
            <person name="Wu T."/>
            <person name="Yu G."/>
            <person name="Miranda M."/>
            <person name="Quach H.L."/>
            <person name="Tripp M."/>
            <person name="Chang C.H."/>
            <person name="Lee J.M."/>
            <person name="Toriumi M.J."/>
            <person name="Chan M.M."/>
            <person name="Tang C.C."/>
            <person name="Onodera C.S."/>
            <person name="Deng J.M."/>
            <person name="Akiyama K."/>
            <person name="Ansari Y."/>
            <person name="Arakawa T."/>
            <person name="Banh J."/>
            <person name="Banno F."/>
            <person name="Bowser L."/>
            <person name="Brooks S.Y."/>
            <person name="Carninci P."/>
            <person name="Chao Q."/>
            <person name="Choy N."/>
            <person name="Enju A."/>
            <person name="Goldsmith A.D."/>
            <person name="Gurjal M."/>
            <person name="Hansen N.F."/>
            <person name="Hayashizaki Y."/>
            <person name="Johnson-Hopson C."/>
            <person name="Hsuan V.W."/>
            <person name="Iida K."/>
            <person name="Karnes M."/>
            <person name="Khan S."/>
            <person name="Koesema E."/>
            <person name="Ishida J."/>
            <person name="Jiang P.X."/>
            <person name="Jones T."/>
            <person name="Kawai J."/>
            <person name="Kamiya A."/>
            <person name="Meyers C."/>
            <person name="Nakajima M."/>
            <person name="Narusaka M."/>
            <person name="Seki M."/>
            <person name="Sakurai T."/>
            <person name="Satou M."/>
            <person name="Tamse R."/>
            <person name="Vaysberg M."/>
            <person name="Wallender E.K."/>
            <person name="Wong C."/>
            <person name="Yamamura Y."/>
            <person name="Yuan S."/>
            <person name="Shinozaki K."/>
            <person name="Davis R.W."/>
            <person name="Theologis A."/>
            <person name="Ecker J.R."/>
        </authorList>
    </citation>
    <scope>NUCLEOTIDE SEQUENCE [LARGE SCALE MRNA]</scope>
    <source>
        <strain>cv. Columbia</strain>
    </source>
</reference>
<reference key="4">
    <citation type="journal article" date="2004" name="Biosci. Biotechnol. Biochem.">
        <title>Identification of three clones which commonly interact with the kinase domains of highly homologous two receptor-like kinases, RLK902 and RKL1.</title>
        <authorList>
            <person name="Tarutani Y."/>
            <person name="Sasaki A."/>
            <person name="Yasuda M."/>
            <person name="Nakashita H."/>
            <person name="Yoshida S."/>
            <person name="Yamaguchi I."/>
            <person name="Suzuki Y."/>
        </authorList>
    </citation>
    <scope>INTERACTION WITH RLK902</scope>
    <scope>TISSUE SPECIFICITY</scope>
    <scope>INDUCTION</scope>
</reference>
<dbReference type="EMBL" id="AP000381">
    <property type="protein sequence ID" value="BAB02116.1"/>
    <property type="molecule type" value="Genomic_DNA"/>
</dbReference>
<dbReference type="EMBL" id="CP002686">
    <property type="protein sequence ID" value="AEE77279.1"/>
    <property type="molecule type" value="Genomic_DNA"/>
</dbReference>
<dbReference type="EMBL" id="AY049232">
    <property type="protein sequence ID" value="AAK83575.1"/>
    <property type="molecule type" value="mRNA"/>
</dbReference>
<dbReference type="EMBL" id="AY079119">
    <property type="protein sequence ID" value="AAL79601.1"/>
    <property type="molecule type" value="mRNA"/>
</dbReference>
<dbReference type="RefSeq" id="NP_566811.1">
    <property type="nucleotide sequence ID" value="NM_113635.3"/>
</dbReference>
<dbReference type="FunCoup" id="Q9LK32">
    <property type="interactions" value="213"/>
</dbReference>
<dbReference type="IntAct" id="Q9LK32">
    <property type="interactions" value="2"/>
</dbReference>
<dbReference type="iPTMnet" id="Q9LK32"/>
<dbReference type="PaxDb" id="3702-AT3G27210.1"/>
<dbReference type="ProteomicsDB" id="228611"/>
<dbReference type="EnsemblPlants" id="AT3G27210.1">
    <property type="protein sequence ID" value="AT3G27210.1"/>
    <property type="gene ID" value="AT3G27210"/>
</dbReference>
<dbReference type="GeneID" id="822340"/>
<dbReference type="Gramene" id="AT3G27210.1">
    <property type="protein sequence ID" value="AT3G27210.1"/>
    <property type="gene ID" value="AT3G27210"/>
</dbReference>
<dbReference type="KEGG" id="ath:AT3G27210"/>
<dbReference type="Araport" id="AT3G27210"/>
<dbReference type="TAIR" id="AT3G27210"/>
<dbReference type="eggNOG" id="ENOG502RYYI">
    <property type="taxonomic scope" value="Eukaryota"/>
</dbReference>
<dbReference type="HOGENOM" id="CLU_1130441_0_0_1"/>
<dbReference type="InParanoid" id="Q9LK32"/>
<dbReference type="OMA" id="WQHHRCL"/>
<dbReference type="OrthoDB" id="1925325at2759"/>
<dbReference type="PhylomeDB" id="Q9LK32"/>
<dbReference type="PRO" id="PR:Q9LK32"/>
<dbReference type="Proteomes" id="UP000006548">
    <property type="component" value="Chromosome 3"/>
</dbReference>
<dbReference type="ExpressionAtlas" id="Q9LK32">
    <property type="expression patterns" value="baseline and differential"/>
</dbReference>
<dbReference type="InterPro" id="IPR038947">
    <property type="entry name" value="At3g27210-like"/>
</dbReference>
<dbReference type="PANTHER" id="PTHR34280:SF12">
    <property type="entry name" value="BNAA06G32320D PROTEIN"/>
    <property type="match status" value="1"/>
</dbReference>
<dbReference type="PANTHER" id="PTHR34280">
    <property type="entry name" value="OS01G0920100 PROTEIN"/>
    <property type="match status" value="1"/>
</dbReference>
<keyword id="KW-1185">Reference proteome</keyword>
<organism>
    <name type="scientific">Arabidopsis thaliana</name>
    <name type="common">Mouse-ear cress</name>
    <dbReference type="NCBI Taxonomy" id="3702"/>
    <lineage>
        <taxon>Eukaryota</taxon>
        <taxon>Viridiplantae</taxon>
        <taxon>Streptophyta</taxon>
        <taxon>Embryophyta</taxon>
        <taxon>Tracheophyta</taxon>
        <taxon>Spermatophyta</taxon>
        <taxon>Magnoliopsida</taxon>
        <taxon>eudicotyledons</taxon>
        <taxon>Gunneridae</taxon>
        <taxon>Pentapetalae</taxon>
        <taxon>rosids</taxon>
        <taxon>malvids</taxon>
        <taxon>Brassicales</taxon>
        <taxon>Brassicaceae</taxon>
        <taxon>Camelineae</taxon>
        <taxon>Arabidopsis</taxon>
    </lineage>
</organism>
<proteinExistence type="evidence at protein level"/>
<evidence type="ECO:0000256" key="1">
    <source>
        <dbReference type="SAM" id="MobiDB-lite"/>
    </source>
</evidence>
<evidence type="ECO:0000269" key="2">
    <source>
    </source>
</evidence>
<accession>Q9LK32</accession>
<feature type="chain" id="PRO_0000317075" description="Uncharacterized protein At3g27210">
    <location>
        <begin position="1"/>
        <end position="234"/>
    </location>
</feature>
<feature type="region of interest" description="Disordered" evidence="1">
    <location>
        <begin position="1"/>
        <end position="184"/>
    </location>
</feature>
<feature type="compositionally biased region" description="Low complexity" evidence="1">
    <location>
        <begin position="1"/>
        <end position="12"/>
    </location>
</feature>
<feature type="compositionally biased region" description="Polar residues" evidence="1">
    <location>
        <begin position="21"/>
        <end position="40"/>
    </location>
</feature>
<feature type="compositionally biased region" description="Polar residues" evidence="1">
    <location>
        <begin position="52"/>
        <end position="64"/>
    </location>
</feature>
<feature type="compositionally biased region" description="Low complexity" evidence="1">
    <location>
        <begin position="66"/>
        <end position="77"/>
    </location>
</feature>
<feature type="compositionally biased region" description="Polar residues" evidence="1">
    <location>
        <begin position="105"/>
        <end position="120"/>
    </location>
</feature>
<feature type="compositionally biased region" description="Basic and acidic residues" evidence="1">
    <location>
        <begin position="152"/>
        <end position="167"/>
    </location>
</feature>
<gene>
    <name type="primary">Y-2</name>
    <name type="ordered locus">At3g27210</name>
    <name type="ORF">K17E12.3</name>
</gene>
<protein>
    <recommendedName>
        <fullName>Uncharacterized protein At3g27210</fullName>
    </recommendedName>
</protein>